<dbReference type="EC" id="2.7.11.13"/>
<dbReference type="EMBL" id="AB015982">
    <property type="protein sequence ID" value="BAA36514.1"/>
    <property type="molecule type" value="mRNA"/>
</dbReference>
<dbReference type="EMBL" id="AC007390">
    <property type="protein sequence ID" value="AAY14817.1"/>
    <property type="molecule type" value="Genomic_DNA"/>
</dbReference>
<dbReference type="EMBL" id="CH471053">
    <property type="protein sequence ID" value="EAX00398.1"/>
    <property type="molecule type" value="Genomic_DNA"/>
</dbReference>
<dbReference type="EMBL" id="CH471053">
    <property type="protein sequence ID" value="EAX00399.1"/>
    <property type="molecule type" value="Genomic_DNA"/>
</dbReference>
<dbReference type="EMBL" id="BC030706">
    <property type="protein sequence ID" value="AAH30706.1"/>
    <property type="molecule type" value="mRNA"/>
</dbReference>
<dbReference type="CCDS" id="CCDS1789.1">
    <molecule id="O94806-1"/>
</dbReference>
<dbReference type="RefSeq" id="NP_005804.1">
    <molecule id="O94806-1"/>
    <property type="nucleotide sequence ID" value="NM_005813.6"/>
</dbReference>
<dbReference type="RefSeq" id="XP_005264294.1">
    <molecule id="O94806-1"/>
    <property type="nucleotide sequence ID" value="XM_005264237.5"/>
</dbReference>
<dbReference type="RefSeq" id="XP_047299808.1">
    <molecule id="O94806-1"/>
    <property type="nucleotide sequence ID" value="XM_047443852.1"/>
</dbReference>
<dbReference type="RefSeq" id="XP_047299809.1">
    <molecule id="O94806-1"/>
    <property type="nucleotide sequence ID" value="XM_047443853.1"/>
</dbReference>
<dbReference type="RefSeq" id="XP_054197212.1">
    <molecule id="O94806-1"/>
    <property type="nucleotide sequence ID" value="XM_054341237.1"/>
</dbReference>
<dbReference type="RefSeq" id="XP_054197213.1">
    <molecule id="O94806-1"/>
    <property type="nucleotide sequence ID" value="XM_054341238.1"/>
</dbReference>
<dbReference type="RefSeq" id="XP_054197214.1">
    <molecule id="O94806-1"/>
    <property type="nucleotide sequence ID" value="XM_054341239.1"/>
</dbReference>
<dbReference type="PDB" id="2D9Z">
    <property type="method" value="NMR"/>
    <property type="chains" value="A=417-532"/>
</dbReference>
<dbReference type="PDBsum" id="2D9Z"/>
<dbReference type="BMRB" id="O94806"/>
<dbReference type="SMR" id="O94806"/>
<dbReference type="BioGRID" id="117199">
    <property type="interactions" value="49"/>
</dbReference>
<dbReference type="FunCoup" id="O94806">
    <property type="interactions" value="3689"/>
</dbReference>
<dbReference type="IntAct" id="O94806">
    <property type="interactions" value="31"/>
</dbReference>
<dbReference type="MINT" id="O94806"/>
<dbReference type="STRING" id="9606.ENSP00000368356"/>
<dbReference type="BindingDB" id="O94806"/>
<dbReference type="ChEMBL" id="CHEMBL2595"/>
<dbReference type="DrugCentral" id="O94806"/>
<dbReference type="GuidetoPHARMACOLOGY" id="2174"/>
<dbReference type="GlyGen" id="O94806">
    <property type="glycosylation" value="3 sites, 3 N-linked glycans (3 sites)"/>
</dbReference>
<dbReference type="iPTMnet" id="O94806"/>
<dbReference type="PhosphoSitePlus" id="O94806"/>
<dbReference type="SwissPalm" id="O94806"/>
<dbReference type="BioMuta" id="PRKD3"/>
<dbReference type="jPOST" id="O94806"/>
<dbReference type="MassIVE" id="O94806"/>
<dbReference type="PaxDb" id="9606-ENSP00000368356"/>
<dbReference type="PeptideAtlas" id="O94806"/>
<dbReference type="ProteomicsDB" id="50446">
    <molecule id="O94806-1"/>
</dbReference>
<dbReference type="ProteomicsDB" id="50447">
    <molecule id="O94806-2"/>
</dbReference>
<dbReference type="Pumba" id="O94806"/>
<dbReference type="Antibodypedia" id="14569">
    <property type="antibodies" value="413 antibodies from 37 providers"/>
</dbReference>
<dbReference type="DNASU" id="23683"/>
<dbReference type="Ensembl" id="ENST00000234179.8">
    <molecule id="O94806-1"/>
    <property type="protein sequence ID" value="ENSP00000234179.2"/>
    <property type="gene ID" value="ENSG00000115825.11"/>
</dbReference>
<dbReference type="Ensembl" id="ENST00000379066.5">
    <molecule id="O94806-1"/>
    <property type="protein sequence ID" value="ENSP00000368356.1"/>
    <property type="gene ID" value="ENSG00000115825.11"/>
</dbReference>
<dbReference type="GeneID" id="23683"/>
<dbReference type="KEGG" id="hsa:23683"/>
<dbReference type="MANE-Select" id="ENST00000234179.8">
    <property type="protein sequence ID" value="ENSP00000234179.2"/>
    <property type="RefSeq nucleotide sequence ID" value="NM_005813.6"/>
    <property type="RefSeq protein sequence ID" value="NP_005804.1"/>
</dbReference>
<dbReference type="UCSC" id="uc002rqd.4">
    <molecule id="O94806-1"/>
    <property type="organism name" value="human"/>
</dbReference>
<dbReference type="AGR" id="HGNC:9408"/>
<dbReference type="CTD" id="23683"/>
<dbReference type="DisGeNET" id="23683"/>
<dbReference type="GeneCards" id="PRKD3"/>
<dbReference type="HGNC" id="HGNC:9408">
    <property type="gene designation" value="PRKD3"/>
</dbReference>
<dbReference type="HPA" id="ENSG00000115825">
    <property type="expression patterns" value="Low tissue specificity"/>
</dbReference>
<dbReference type="MIM" id="607077">
    <property type="type" value="gene"/>
</dbReference>
<dbReference type="neXtProt" id="NX_O94806"/>
<dbReference type="NIAGADS" id="ENSG00000115825"/>
<dbReference type="OpenTargets" id="ENSG00000115825"/>
<dbReference type="PharmGKB" id="PA33772"/>
<dbReference type="VEuPathDB" id="HostDB:ENSG00000115825"/>
<dbReference type="eggNOG" id="KOG4236">
    <property type="taxonomic scope" value="Eukaryota"/>
</dbReference>
<dbReference type="GeneTree" id="ENSGT00950000183024"/>
<dbReference type="HOGENOM" id="CLU_009772_1_0_1"/>
<dbReference type="InParanoid" id="O94806"/>
<dbReference type="OMA" id="PKVPRDC"/>
<dbReference type="OrthoDB" id="74314at2759"/>
<dbReference type="PAN-GO" id="O94806">
    <property type="GO annotations" value="1 GO annotation based on evolutionary models"/>
</dbReference>
<dbReference type="PhylomeDB" id="O94806"/>
<dbReference type="TreeFam" id="TF314320"/>
<dbReference type="BRENDA" id="2.7.11.13">
    <property type="organism ID" value="2681"/>
</dbReference>
<dbReference type="PathwayCommons" id="O94806"/>
<dbReference type="Reactome" id="R-HSA-1660661">
    <property type="pathway name" value="Sphingolipid de novo biosynthesis"/>
</dbReference>
<dbReference type="SignaLink" id="O94806"/>
<dbReference type="SIGNOR" id="O94806"/>
<dbReference type="BioGRID-ORCS" id="23683">
    <property type="hits" value="15 hits in 1190 CRISPR screens"/>
</dbReference>
<dbReference type="CD-CODE" id="8C2F96ED">
    <property type="entry name" value="Centrosome"/>
</dbReference>
<dbReference type="ChiTaRS" id="PRKD3">
    <property type="organism name" value="human"/>
</dbReference>
<dbReference type="EvolutionaryTrace" id="O94806"/>
<dbReference type="GeneWiki" id="PRKD3"/>
<dbReference type="GenomeRNAi" id="23683"/>
<dbReference type="Pharos" id="O94806">
    <property type="development level" value="Tchem"/>
</dbReference>
<dbReference type="PRO" id="PR:O94806"/>
<dbReference type="Proteomes" id="UP000005640">
    <property type="component" value="Chromosome 2"/>
</dbReference>
<dbReference type="RNAct" id="O94806">
    <property type="molecule type" value="protein"/>
</dbReference>
<dbReference type="Bgee" id="ENSG00000115825">
    <property type="expression patterns" value="Expressed in calcaneal tendon and 198 other cell types or tissues"/>
</dbReference>
<dbReference type="ExpressionAtlas" id="O94806">
    <property type="expression patterns" value="baseline and differential"/>
</dbReference>
<dbReference type="GO" id="GO:0036064">
    <property type="term" value="C:ciliary basal body"/>
    <property type="evidence" value="ECO:0000314"/>
    <property type="project" value="HPA"/>
</dbReference>
<dbReference type="GO" id="GO:0005829">
    <property type="term" value="C:cytosol"/>
    <property type="evidence" value="ECO:0000314"/>
    <property type="project" value="HPA"/>
</dbReference>
<dbReference type="GO" id="GO:0005654">
    <property type="term" value="C:nucleoplasm"/>
    <property type="evidence" value="ECO:0000314"/>
    <property type="project" value="HPA"/>
</dbReference>
<dbReference type="GO" id="GO:0005886">
    <property type="term" value="C:plasma membrane"/>
    <property type="evidence" value="ECO:0000314"/>
    <property type="project" value="HPA"/>
</dbReference>
<dbReference type="GO" id="GO:0005524">
    <property type="term" value="F:ATP binding"/>
    <property type="evidence" value="ECO:0007669"/>
    <property type="project" value="UniProtKB-KW"/>
</dbReference>
<dbReference type="GO" id="GO:0004697">
    <property type="term" value="F:diacylglycerol-dependent serine/threonine kinase activity"/>
    <property type="evidence" value="ECO:0000304"/>
    <property type="project" value="Reactome"/>
</dbReference>
<dbReference type="GO" id="GO:0016301">
    <property type="term" value="F:kinase activity"/>
    <property type="evidence" value="ECO:0000314"/>
    <property type="project" value="CACAO"/>
</dbReference>
<dbReference type="GO" id="GO:0106310">
    <property type="term" value="F:protein serine kinase activity"/>
    <property type="evidence" value="ECO:0007669"/>
    <property type="project" value="RHEA"/>
</dbReference>
<dbReference type="GO" id="GO:0004674">
    <property type="term" value="F:protein serine/threonine kinase activity"/>
    <property type="evidence" value="ECO:0000318"/>
    <property type="project" value="GO_Central"/>
</dbReference>
<dbReference type="GO" id="GO:0008270">
    <property type="term" value="F:zinc ion binding"/>
    <property type="evidence" value="ECO:0007669"/>
    <property type="project" value="UniProtKB-KW"/>
</dbReference>
<dbReference type="GO" id="GO:0035556">
    <property type="term" value="P:intracellular signal transduction"/>
    <property type="evidence" value="ECO:0000318"/>
    <property type="project" value="GO_Central"/>
</dbReference>
<dbReference type="GO" id="GO:0007200">
    <property type="term" value="P:phospholipase C-activating G protein-coupled receptor signaling pathway"/>
    <property type="evidence" value="ECO:0000318"/>
    <property type="project" value="GO_Central"/>
</dbReference>
<dbReference type="GO" id="GO:0006468">
    <property type="term" value="P:protein phosphorylation"/>
    <property type="evidence" value="ECO:0000304"/>
    <property type="project" value="ProtInc"/>
</dbReference>
<dbReference type="GO" id="GO:0030148">
    <property type="term" value="P:sphingolipid biosynthetic process"/>
    <property type="evidence" value="ECO:0000304"/>
    <property type="project" value="Reactome"/>
</dbReference>
<dbReference type="CDD" id="cd20841">
    <property type="entry name" value="C1_PKD3_rpt1"/>
    <property type="match status" value="1"/>
</dbReference>
<dbReference type="CDD" id="cd20844">
    <property type="entry name" value="C1_PKD3_rpt2"/>
    <property type="match status" value="1"/>
</dbReference>
<dbReference type="CDD" id="cd01239">
    <property type="entry name" value="PH_PKD"/>
    <property type="match status" value="1"/>
</dbReference>
<dbReference type="CDD" id="cd14082">
    <property type="entry name" value="STKc_PKD"/>
    <property type="match status" value="1"/>
</dbReference>
<dbReference type="FunFam" id="1.10.510.10:FF:000151">
    <property type="entry name" value="Serine/threonine-protein kinase"/>
    <property type="match status" value="1"/>
</dbReference>
<dbReference type="FunFam" id="2.30.29.30:FF:000056">
    <property type="entry name" value="Serine/threonine-protein kinase"/>
    <property type="match status" value="1"/>
</dbReference>
<dbReference type="FunFam" id="3.30.200.20:FF:000137">
    <property type="entry name" value="Serine/threonine-protein kinase"/>
    <property type="match status" value="1"/>
</dbReference>
<dbReference type="FunFam" id="3.30.60.20:FF:000007">
    <property type="entry name" value="Serine/threonine-protein kinase"/>
    <property type="match status" value="1"/>
</dbReference>
<dbReference type="FunFam" id="3.30.60.20:FF:000019">
    <property type="entry name" value="Serine/threonine-protein kinase"/>
    <property type="match status" value="1"/>
</dbReference>
<dbReference type="Gene3D" id="3.30.60.20">
    <property type="match status" value="2"/>
</dbReference>
<dbReference type="Gene3D" id="3.30.200.20">
    <property type="entry name" value="Phosphorylase Kinase, domain 1"/>
    <property type="match status" value="1"/>
</dbReference>
<dbReference type="Gene3D" id="2.30.29.30">
    <property type="entry name" value="Pleckstrin-homology domain (PH domain)/Phosphotyrosine-binding domain (PTB)"/>
    <property type="match status" value="1"/>
</dbReference>
<dbReference type="Gene3D" id="1.10.510.10">
    <property type="entry name" value="Transferase(Phosphotransferase) domain 1"/>
    <property type="match status" value="1"/>
</dbReference>
<dbReference type="InterPro" id="IPR046349">
    <property type="entry name" value="C1-like_sf"/>
</dbReference>
<dbReference type="InterPro" id="IPR020454">
    <property type="entry name" value="DAG/PE-bd"/>
</dbReference>
<dbReference type="InterPro" id="IPR011009">
    <property type="entry name" value="Kinase-like_dom_sf"/>
</dbReference>
<dbReference type="InterPro" id="IPR002219">
    <property type="entry name" value="PE/DAG-bd"/>
</dbReference>
<dbReference type="InterPro" id="IPR011993">
    <property type="entry name" value="PH-like_dom_sf"/>
</dbReference>
<dbReference type="InterPro" id="IPR001849">
    <property type="entry name" value="PH_domain"/>
</dbReference>
<dbReference type="InterPro" id="IPR000719">
    <property type="entry name" value="Prot_kinase_dom"/>
</dbReference>
<dbReference type="InterPro" id="IPR017441">
    <property type="entry name" value="Protein_kinase_ATP_BS"/>
</dbReference>
<dbReference type="InterPro" id="IPR015727">
    <property type="entry name" value="Protein_Kinase_C_mu-related"/>
</dbReference>
<dbReference type="InterPro" id="IPR008271">
    <property type="entry name" value="Ser/Thr_kinase_AS"/>
</dbReference>
<dbReference type="PANTHER" id="PTHR22968">
    <property type="entry name" value="PROTEIN KINASE C, MU"/>
    <property type="match status" value="1"/>
</dbReference>
<dbReference type="PANTHER" id="PTHR22968:SF26">
    <property type="entry name" value="SERINE_THREONINE-PROTEIN KINASE D3"/>
    <property type="match status" value="1"/>
</dbReference>
<dbReference type="Pfam" id="PF00130">
    <property type="entry name" value="C1_1"/>
    <property type="match status" value="2"/>
</dbReference>
<dbReference type="Pfam" id="PF00169">
    <property type="entry name" value="PH"/>
    <property type="match status" value="1"/>
</dbReference>
<dbReference type="Pfam" id="PF00069">
    <property type="entry name" value="Pkinase"/>
    <property type="match status" value="1"/>
</dbReference>
<dbReference type="PIRSF" id="PIRSF000552">
    <property type="entry name" value="PKC_mu_nu_D2"/>
    <property type="match status" value="1"/>
</dbReference>
<dbReference type="PRINTS" id="PR00008">
    <property type="entry name" value="DAGPEDOMAIN"/>
</dbReference>
<dbReference type="SMART" id="SM00109">
    <property type="entry name" value="C1"/>
    <property type="match status" value="2"/>
</dbReference>
<dbReference type="SMART" id="SM00233">
    <property type="entry name" value="PH"/>
    <property type="match status" value="1"/>
</dbReference>
<dbReference type="SMART" id="SM00220">
    <property type="entry name" value="S_TKc"/>
    <property type="match status" value="1"/>
</dbReference>
<dbReference type="SUPFAM" id="SSF57889">
    <property type="entry name" value="Cysteine-rich domain"/>
    <property type="match status" value="2"/>
</dbReference>
<dbReference type="SUPFAM" id="SSF50729">
    <property type="entry name" value="PH domain-like"/>
    <property type="match status" value="1"/>
</dbReference>
<dbReference type="SUPFAM" id="SSF56112">
    <property type="entry name" value="Protein kinase-like (PK-like)"/>
    <property type="match status" value="1"/>
</dbReference>
<dbReference type="PROSITE" id="PS50003">
    <property type="entry name" value="PH_DOMAIN"/>
    <property type="match status" value="1"/>
</dbReference>
<dbReference type="PROSITE" id="PS00107">
    <property type="entry name" value="PROTEIN_KINASE_ATP"/>
    <property type="match status" value="1"/>
</dbReference>
<dbReference type="PROSITE" id="PS50011">
    <property type="entry name" value="PROTEIN_KINASE_DOM"/>
    <property type="match status" value="1"/>
</dbReference>
<dbReference type="PROSITE" id="PS00108">
    <property type="entry name" value="PROTEIN_KINASE_ST"/>
    <property type="match status" value="1"/>
</dbReference>
<dbReference type="PROSITE" id="PS00479">
    <property type="entry name" value="ZF_DAG_PE_1"/>
    <property type="match status" value="2"/>
</dbReference>
<dbReference type="PROSITE" id="PS50081">
    <property type="entry name" value="ZF_DAG_PE_2"/>
    <property type="match status" value="2"/>
</dbReference>
<organism>
    <name type="scientific">Homo sapiens</name>
    <name type="common">Human</name>
    <dbReference type="NCBI Taxonomy" id="9606"/>
    <lineage>
        <taxon>Eukaryota</taxon>
        <taxon>Metazoa</taxon>
        <taxon>Chordata</taxon>
        <taxon>Craniata</taxon>
        <taxon>Vertebrata</taxon>
        <taxon>Euteleostomi</taxon>
        <taxon>Mammalia</taxon>
        <taxon>Eutheria</taxon>
        <taxon>Euarchontoglires</taxon>
        <taxon>Primates</taxon>
        <taxon>Haplorrhini</taxon>
        <taxon>Catarrhini</taxon>
        <taxon>Hominidae</taxon>
        <taxon>Homo</taxon>
    </lineage>
</organism>
<reference key="1">
    <citation type="journal article" date="1999" name="Biochim. Biophys. Acta">
        <title>PKCnu, a new member of the protein kinase C family, composes a fourth subfamily with PKCmu.</title>
        <authorList>
            <person name="Hayashi A."/>
            <person name="Seki N."/>
            <person name="Hattori A."/>
            <person name="Kozuma S."/>
            <person name="Saito T."/>
        </authorList>
    </citation>
    <scope>NUCLEOTIDE SEQUENCE [MRNA] (ISOFORM 1)</scope>
    <source>
        <tissue>Embryo</tissue>
    </source>
</reference>
<reference key="2">
    <citation type="journal article" date="2005" name="Nature">
        <title>Generation and annotation of the DNA sequences of human chromosomes 2 and 4.</title>
        <authorList>
            <person name="Hillier L.W."/>
            <person name="Graves T.A."/>
            <person name="Fulton R.S."/>
            <person name="Fulton L.A."/>
            <person name="Pepin K.H."/>
            <person name="Minx P."/>
            <person name="Wagner-McPherson C."/>
            <person name="Layman D."/>
            <person name="Wylie K."/>
            <person name="Sekhon M."/>
            <person name="Becker M.C."/>
            <person name="Fewell G.A."/>
            <person name="Delehaunty K.D."/>
            <person name="Miner T.L."/>
            <person name="Nash W.E."/>
            <person name="Kremitzki C."/>
            <person name="Oddy L."/>
            <person name="Du H."/>
            <person name="Sun H."/>
            <person name="Bradshaw-Cordum H."/>
            <person name="Ali J."/>
            <person name="Carter J."/>
            <person name="Cordes M."/>
            <person name="Harris A."/>
            <person name="Isak A."/>
            <person name="van Brunt A."/>
            <person name="Nguyen C."/>
            <person name="Du F."/>
            <person name="Courtney L."/>
            <person name="Kalicki J."/>
            <person name="Ozersky P."/>
            <person name="Abbott S."/>
            <person name="Armstrong J."/>
            <person name="Belter E.A."/>
            <person name="Caruso L."/>
            <person name="Cedroni M."/>
            <person name="Cotton M."/>
            <person name="Davidson T."/>
            <person name="Desai A."/>
            <person name="Elliott G."/>
            <person name="Erb T."/>
            <person name="Fronick C."/>
            <person name="Gaige T."/>
            <person name="Haakenson W."/>
            <person name="Haglund K."/>
            <person name="Holmes A."/>
            <person name="Harkins R."/>
            <person name="Kim K."/>
            <person name="Kruchowski S.S."/>
            <person name="Strong C.M."/>
            <person name="Grewal N."/>
            <person name="Goyea E."/>
            <person name="Hou S."/>
            <person name="Levy A."/>
            <person name="Martinka S."/>
            <person name="Mead K."/>
            <person name="McLellan M.D."/>
            <person name="Meyer R."/>
            <person name="Randall-Maher J."/>
            <person name="Tomlinson C."/>
            <person name="Dauphin-Kohlberg S."/>
            <person name="Kozlowicz-Reilly A."/>
            <person name="Shah N."/>
            <person name="Swearengen-Shahid S."/>
            <person name="Snider J."/>
            <person name="Strong J.T."/>
            <person name="Thompson J."/>
            <person name="Yoakum M."/>
            <person name="Leonard S."/>
            <person name="Pearman C."/>
            <person name="Trani L."/>
            <person name="Radionenko M."/>
            <person name="Waligorski J.E."/>
            <person name="Wang C."/>
            <person name="Rock S.M."/>
            <person name="Tin-Wollam A.-M."/>
            <person name="Maupin R."/>
            <person name="Latreille P."/>
            <person name="Wendl M.C."/>
            <person name="Yang S.-P."/>
            <person name="Pohl C."/>
            <person name="Wallis J.W."/>
            <person name="Spieth J."/>
            <person name="Bieri T.A."/>
            <person name="Berkowicz N."/>
            <person name="Nelson J.O."/>
            <person name="Osborne J."/>
            <person name="Ding L."/>
            <person name="Meyer R."/>
            <person name="Sabo A."/>
            <person name="Shotland Y."/>
            <person name="Sinha P."/>
            <person name="Wohldmann P.E."/>
            <person name="Cook L.L."/>
            <person name="Hickenbotham M.T."/>
            <person name="Eldred J."/>
            <person name="Williams D."/>
            <person name="Jones T.A."/>
            <person name="She X."/>
            <person name="Ciccarelli F.D."/>
            <person name="Izaurralde E."/>
            <person name="Taylor J."/>
            <person name="Schmutz J."/>
            <person name="Myers R.M."/>
            <person name="Cox D.R."/>
            <person name="Huang X."/>
            <person name="McPherson J.D."/>
            <person name="Mardis E.R."/>
            <person name="Clifton S.W."/>
            <person name="Warren W.C."/>
            <person name="Chinwalla A.T."/>
            <person name="Eddy S.R."/>
            <person name="Marra M.A."/>
            <person name="Ovcharenko I."/>
            <person name="Furey T.S."/>
            <person name="Miller W."/>
            <person name="Eichler E.E."/>
            <person name="Bork P."/>
            <person name="Suyama M."/>
            <person name="Torrents D."/>
            <person name="Waterston R.H."/>
            <person name="Wilson R.K."/>
        </authorList>
    </citation>
    <scope>NUCLEOTIDE SEQUENCE [LARGE SCALE GENOMIC DNA]</scope>
</reference>
<reference key="3">
    <citation type="submission" date="2005-09" db="EMBL/GenBank/DDBJ databases">
        <authorList>
            <person name="Mural R.J."/>
            <person name="Istrail S."/>
            <person name="Sutton G.G."/>
            <person name="Florea L."/>
            <person name="Halpern A.L."/>
            <person name="Mobarry C.M."/>
            <person name="Lippert R."/>
            <person name="Walenz B."/>
            <person name="Shatkay H."/>
            <person name="Dew I."/>
            <person name="Miller J.R."/>
            <person name="Flanigan M.J."/>
            <person name="Edwards N.J."/>
            <person name="Bolanos R."/>
            <person name="Fasulo D."/>
            <person name="Halldorsson B.V."/>
            <person name="Hannenhalli S."/>
            <person name="Turner R."/>
            <person name="Yooseph S."/>
            <person name="Lu F."/>
            <person name="Nusskern D.R."/>
            <person name="Shue B.C."/>
            <person name="Zheng X.H."/>
            <person name="Zhong F."/>
            <person name="Delcher A.L."/>
            <person name="Huson D.H."/>
            <person name="Kravitz S.A."/>
            <person name="Mouchard L."/>
            <person name="Reinert K."/>
            <person name="Remington K.A."/>
            <person name="Clark A.G."/>
            <person name="Waterman M.S."/>
            <person name="Eichler E.E."/>
            <person name="Adams M.D."/>
            <person name="Hunkapiller M.W."/>
            <person name="Myers E.W."/>
            <person name="Venter J.C."/>
        </authorList>
    </citation>
    <scope>NUCLEOTIDE SEQUENCE [LARGE SCALE GENOMIC DNA]</scope>
</reference>
<reference key="4">
    <citation type="submission" date="2005-07" db="EMBL/GenBank/DDBJ databases">
        <authorList>
            <person name="Mural R.J."/>
            <person name="Istrail S."/>
            <person name="Sutton G.G."/>
            <person name="Florea L."/>
            <person name="Halpern A.L."/>
            <person name="Mobarry C.M."/>
            <person name="Lippert R."/>
            <person name="Walenz B."/>
            <person name="Shatkay H."/>
            <person name="Dew I."/>
            <person name="Miller J.R."/>
            <person name="Flanigan M.J."/>
            <person name="Edwards N.J."/>
            <person name="Bolanos R."/>
            <person name="Fasulo D."/>
            <person name="Halldorsson B.V."/>
            <person name="Hannenhalli S."/>
            <person name="Turner R."/>
            <person name="Yooseph S."/>
            <person name="Lu F."/>
            <person name="Nusskern D.R."/>
            <person name="Shue B.C."/>
            <person name="Zheng X.H."/>
            <person name="Zhong F."/>
            <person name="Delcher A.L."/>
            <person name="Huson D.H."/>
            <person name="Kravitz S.A."/>
            <person name="Mouchard L."/>
            <person name="Reinert K."/>
            <person name="Remington K.A."/>
            <person name="Clark A.G."/>
            <person name="Waterman M.S."/>
            <person name="Eichler E.E."/>
            <person name="Adams M.D."/>
            <person name="Hunkapiller M.W."/>
            <person name="Myers E.W."/>
            <person name="Venter J.C."/>
        </authorList>
    </citation>
    <scope>NUCLEOTIDE SEQUENCE [LARGE SCALE GENOMIC DNA]</scope>
</reference>
<reference key="5">
    <citation type="journal article" date="2004" name="Genome Res.">
        <title>The status, quality, and expansion of the NIH full-length cDNA project: the Mammalian Gene Collection (MGC).</title>
        <authorList>
            <consortium name="The MGC Project Team"/>
        </authorList>
    </citation>
    <scope>NUCLEOTIDE SEQUENCE [LARGE SCALE MRNA] (ISOFORM 2)</scope>
    <scope>VARIANTS THR-128 AND ARG-546</scope>
    <source>
        <tissue>Testis</tissue>
    </source>
</reference>
<reference key="6">
    <citation type="journal article" date="2006" name="Nat. Biotechnol.">
        <title>A probability-based approach for high-throughput protein phosphorylation analysis and site localization.</title>
        <authorList>
            <person name="Beausoleil S.A."/>
            <person name="Villen J."/>
            <person name="Gerber S.A."/>
            <person name="Rush J."/>
            <person name="Gygi S.P."/>
        </authorList>
    </citation>
    <scope>PHOSPHORYLATION [LARGE SCALE ANALYSIS] AT SER-364</scope>
    <scope>IDENTIFICATION BY MASS SPECTROMETRY [LARGE SCALE ANALYSIS]</scope>
    <source>
        <tissue>Cervix carcinoma</tissue>
    </source>
</reference>
<reference key="7">
    <citation type="journal article" date="2008" name="Biochem. J.">
        <title>Selective binding of phorbol esters and diacylglycerol by individual C1 domains of the PKD family.</title>
        <authorList>
            <person name="Chen J."/>
            <person name="Deng F."/>
            <person name="Li J."/>
            <person name="Wang Q.J."/>
        </authorList>
    </citation>
    <scope>ACTIVITY REGULATION</scope>
    <scope>SUBCELLULAR LOCATION</scope>
    <scope>PHORBOL-ESTER BINDING</scope>
    <scope>MUTAGENESIS OF THR-156; TYR-158; PRO-165; THR-166; TYR-170; PRO-282 AND LYS-293</scope>
</reference>
<reference key="8">
    <citation type="journal article" date="2008" name="Mol. Cell">
        <title>Kinase-selective enrichment enables quantitative phosphoproteomics of the kinome across the cell cycle.</title>
        <authorList>
            <person name="Daub H."/>
            <person name="Olsen J.V."/>
            <person name="Bairlein M."/>
            <person name="Gnad F."/>
            <person name="Oppermann F.S."/>
            <person name="Korner R."/>
            <person name="Greff Z."/>
            <person name="Keri G."/>
            <person name="Stemmann O."/>
            <person name="Mann M."/>
        </authorList>
    </citation>
    <scope>PHOSPHORYLATION [LARGE SCALE ANALYSIS] AT SER-6; SER-27; SER-37; SER-41; SER-213; SER-216; SER-364 AND THR-535</scope>
    <scope>IDENTIFICATION BY MASS SPECTROMETRY [LARGE SCALE ANALYSIS]</scope>
    <source>
        <tissue>Cervix carcinoma</tissue>
    </source>
</reference>
<reference key="9">
    <citation type="journal article" date="2008" name="Proc. Natl. Acad. Sci. U.S.A.">
        <title>A quantitative atlas of mitotic phosphorylation.</title>
        <authorList>
            <person name="Dephoure N."/>
            <person name="Zhou C."/>
            <person name="Villen J."/>
            <person name="Beausoleil S.A."/>
            <person name="Bakalarski C.E."/>
            <person name="Elledge S.J."/>
            <person name="Gygi S.P."/>
        </authorList>
    </citation>
    <scope>PHOSPHORYLATION [LARGE SCALE ANALYSIS] AT SER-27; SER-41; SER-44 AND SER-364</scope>
    <scope>IDENTIFICATION BY MASS SPECTROMETRY [LARGE SCALE ANALYSIS]</scope>
    <source>
        <tissue>Cervix carcinoma</tissue>
    </source>
</reference>
<reference key="10">
    <citation type="journal article" date="2009" name="Anal. Chem.">
        <title>Lys-N and trypsin cover complementary parts of the phosphoproteome in a refined SCX-based approach.</title>
        <authorList>
            <person name="Gauci S."/>
            <person name="Helbig A.O."/>
            <person name="Slijper M."/>
            <person name="Krijgsveld J."/>
            <person name="Heck A.J."/>
            <person name="Mohammed S."/>
        </authorList>
    </citation>
    <scope>IDENTIFICATION BY MASS SPECTROMETRY [LARGE SCALE ANALYSIS]</scope>
</reference>
<reference key="11">
    <citation type="journal article" date="2009" name="Mol. Cell. Proteomics">
        <title>Large-scale proteomics analysis of the human kinome.</title>
        <authorList>
            <person name="Oppermann F.S."/>
            <person name="Gnad F."/>
            <person name="Olsen J.V."/>
            <person name="Hornberger R."/>
            <person name="Greff Z."/>
            <person name="Keri G."/>
            <person name="Mann M."/>
            <person name="Daub H."/>
        </authorList>
    </citation>
    <scope>PHOSPHORYLATION [LARGE SCALE ANALYSIS] AT SER-27; SER-41; SER-213; SER-216; SER-364 AND THR-535</scope>
    <scope>IDENTIFICATION BY MASS SPECTROMETRY [LARGE SCALE ANALYSIS]</scope>
</reference>
<reference key="12">
    <citation type="journal article" date="2010" name="Sci. Signal.">
        <title>Quantitative phosphoproteomics reveals widespread full phosphorylation site occupancy during mitosis.</title>
        <authorList>
            <person name="Olsen J.V."/>
            <person name="Vermeulen M."/>
            <person name="Santamaria A."/>
            <person name="Kumar C."/>
            <person name="Miller M.L."/>
            <person name="Jensen L.J."/>
            <person name="Gnad F."/>
            <person name="Cox J."/>
            <person name="Jensen T.S."/>
            <person name="Nigg E.A."/>
            <person name="Brunak S."/>
            <person name="Mann M."/>
        </authorList>
    </citation>
    <scope>PHOSPHORYLATION [LARGE SCALE ANALYSIS] AT SER-27; SER-41 AND SER-44</scope>
    <scope>IDENTIFICATION BY MASS SPECTROMETRY [LARGE SCALE ANALYSIS]</scope>
    <source>
        <tissue>Cervix carcinoma</tissue>
    </source>
</reference>
<reference key="13">
    <citation type="journal article" date="2013" name="J. Proteome Res.">
        <title>Toward a comprehensive characterization of a human cancer cell phosphoproteome.</title>
        <authorList>
            <person name="Zhou H."/>
            <person name="Di Palma S."/>
            <person name="Preisinger C."/>
            <person name="Peng M."/>
            <person name="Polat A.N."/>
            <person name="Heck A.J."/>
            <person name="Mohammed S."/>
        </authorList>
    </citation>
    <scope>PHOSPHORYLATION [LARGE SCALE ANALYSIS] AT SER-41; SER-44 AND SER-364</scope>
    <scope>IDENTIFICATION BY MASS SPECTROMETRY [LARGE SCALE ANALYSIS]</scope>
    <source>
        <tissue>Cervix carcinoma</tissue>
        <tissue>Erythroleukemia</tissue>
    </source>
</reference>
<reference key="14">
    <citation type="submission" date="2007-01" db="PDB data bank">
        <title>Solution structure of the PH domain of protein kinase C, nu type from human.</title>
        <authorList>
            <consortium name="RIKEN structural genomics initiative (RSGI)"/>
        </authorList>
    </citation>
    <scope>STRUCTURE BY NMR OF 414-532</scope>
</reference>
<reference key="15">
    <citation type="journal article" date="2007" name="Nature">
        <title>Patterns of somatic mutation in human cancer genomes.</title>
        <authorList>
            <person name="Greenman C."/>
            <person name="Stephens P."/>
            <person name="Smith R."/>
            <person name="Dalgliesh G.L."/>
            <person name="Hunter C."/>
            <person name="Bignell G."/>
            <person name="Davies H."/>
            <person name="Teague J."/>
            <person name="Butler A."/>
            <person name="Stevens C."/>
            <person name="Edkins S."/>
            <person name="O'Meara S."/>
            <person name="Vastrik I."/>
            <person name="Schmidt E.E."/>
            <person name="Avis T."/>
            <person name="Barthorpe S."/>
            <person name="Bhamra G."/>
            <person name="Buck G."/>
            <person name="Choudhury B."/>
            <person name="Clements J."/>
            <person name="Cole J."/>
            <person name="Dicks E."/>
            <person name="Forbes S."/>
            <person name="Gray K."/>
            <person name="Halliday K."/>
            <person name="Harrison R."/>
            <person name="Hills K."/>
            <person name="Hinton J."/>
            <person name="Jenkinson A."/>
            <person name="Jones D."/>
            <person name="Menzies A."/>
            <person name="Mironenko T."/>
            <person name="Perry J."/>
            <person name="Raine K."/>
            <person name="Richardson D."/>
            <person name="Shepherd R."/>
            <person name="Small A."/>
            <person name="Tofts C."/>
            <person name="Varian J."/>
            <person name="Webb T."/>
            <person name="West S."/>
            <person name="Widaa S."/>
            <person name="Yates A."/>
            <person name="Cahill D.P."/>
            <person name="Louis D.N."/>
            <person name="Goldstraw P."/>
            <person name="Nicholson A.G."/>
            <person name="Brasseur F."/>
            <person name="Looijenga L."/>
            <person name="Weber B.L."/>
            <person name="Chiew Y.-E."/>
            <person name="DeFazio A."/>
            <person name="Greaves M.F."/>
            <person name="Green A.R."/>
            <person name="Campbell P."/>
            <person name="Birney E."/>
            <person name="Easton D.F."/>
            <person name="Chenevix-Trench G."/>
            <person name="Tan M.-H."/>
            <person name="Khoo S.K."/>
            <person name="Teh B.T."/>
            <person name="Yuen S.T."/>
            <person name="Leung S.Y."/>
            <person name="Wooster R."/>
            <person name="Futreal P.A."/>
            <person name="Stratton M.R."/>
        </authorList>
    </citation>
    <scope>VARIANT [LARGE SCALE ANALYSIS] MET-716</scope>
</reference>
<accession>O94806</accession>
<accession>D6W587</accession>
<accession>Q53TR7</accession>
<accession>Q8NEL8</accession>
<name>KPCD3_HUMAN</name>
<evidence type="ECO:0000250" key="1"/>
<evidence type="ECO:0000250" key="2">
    <source>
        <dbReference type="UniProtKB" id="Q15139"/>
    </source>
</evidence>
<evidence type="ECO:0000250" key="3">
    <source>
        <dbReference type="UniProtKB" id="Q8K1Y2"/>
    </source>
</evidence>
<evidence type="ECO:0000250" key="4">
    <source>
        <dbReference type="UniProtKB" id="Q9BZL6"/>
    </source>
</evidence>
<evidence type="ECO:0000255" key="5">
    <source>
        <dbReference type="PROSITE-ProRule" id="PRU00145"/>
    </source>
</evidence>
<evidence type="ECO:0000255" key="6">
    <source>
        <dbReference type="PROSITE-ProRule" id="PRU00159"/>
    </source>
</evidence>
<evidence type="ECO:0000255" key="7">
    <source>
        <dbReference type="PROSITE-ProRule" id="PRU00226"/>
    </source>
</evidence>
<evidence type="ECO:0000255" key="8">
    <source>
        <dbReference type="PROSITE-ProRule" id="PRU10027"/>
    </source>
</evidence>
<evidence type="ECO:0000256" key="9">
    <source>
        <dbReference type="SAM" id="MobiDB-lite"/>
    </source>
</evidence>
<evidence type="ECO:0000269" key="10">
    <source>
    </source>
</evidence>
<evidence type="ECO:0000269" key="11">
    <source>
    </source>
</evidence>
<evidence type="ECO:0000269" key="12">
    <source>
    </source>
</evidence>
<evidence type="ECO:0000303" key="13">
    <source>
    </source>
</evidence>
<evidence type="ECO:0000305" key="14"/>
<evidence type="ECO:0007744" key="15">
    <source>
    </source>
</evidence>
<evidence type="ECO:0007744" key="16">
    <source>
    </source>
</evidence>
<evidence type="ECO:0007744" key="17">
    <source>
    </source>
</evidence>
<evidence type="ECO:0007744" key="18">
    <source>
    </source>
</evidence>
<evidence type="ECO:0007744" key="19">
    <source>
    </source>
</evidence>
<evidence type="ECO:0007744" key="20">
    <source>
    </source>
</evidence>
<evidence type="ECO:0007829" key="21">
    <source>
        <dbReference type="PDB" id="2D9Z"/>
    </source>
</evidence>
<keyword id="KW-0002">3D-structure</keyword>
<keyword id="KW-0025">Alternative splicing</keyword>
<keyword id="KW-0067">ATP-binding</keyword>
<keyword id="KW-0963">Cytoplasm</keyword>
<keyword id="KW-0418">Kinase</keyword>
<keyword id="KW-0460">Magnesium</keyword>
<keyword id="KW-0472">Membrane</keyword>
<keyword id="KW-0479">Metal-binding</keyword>
<keyword id="KW-0547">Nucleotide-binding</keyword>
<keyword id="KW-0597">Phosphoprotein</keyword>
<keyword id="KW-1267">Proteomics identification</keyword>
<keyword id="KW-1185">Reference proteome</keyword>
<keyword id="KW-0677">Repeat</keyword>
<keyword id="KW-0723">Serine/threonine-protein kinase</keyword>
<keyword id="KW-0808">Transferase</keyword>
<keyword id="KW-0862">Zinc</keyword>
<keyword id="KW-0863">Zinc-finger</keyword>
<gene>
    <name type="primary">PRKD3</name>
    <name type="synonym">EPK2</name>
    <name type="synonym">PRKCN</name>
</gene>
<comment type="function">
    <text evidence="1">Converts transient diacylglycerol (DAG) signals into prolonged physiological effects, downstream of PKC. Involved in resistance to oxidative stress (By similarity).</text>
</comment>
<comment type="catalytic activity">
    <reaction>
        <text>L-seryl-[protein] + ATP = O-phospho-L-seryl-[protein] + ADP + H(+)</text>
        <dbReference type="Rhea" id="RHEA:17989"/>
        <dbReference type="Rhea" id="RHEA-COMP:9863"/>
        <dbReference type="Rhea" id="RHEA-COMP:11604"/>
        <dbReference type="ChEBI" id="CHEBI:15378"/>
        <dbReference type="ChEBI" id="CHEBI:29999"/>
        <dbReference type="ChEBI" id="CHEBI:30616"/>
        <dbReference type="ChEBI" id="CHEBI:83421"/>
        <dbReference type="ChEBI" id="CHEBI:456216"/>
        <dbReference type="EC" id="2.7.11.13"/>
    </reaction>
</comment>
<comment type="catalytic activity">
    <reaction>
        <text>L-threonyl-[protein] + ATP = O-phospho-L-threonyl-[protein] + ADP + H(+)</text>
        <dbReference type="Rhea" id="RHEA:46608"/>
        <dbReference type="Rhea" id="RHEA-COMP:11060"/>
        <dbReference type="Rhea" id="RHEA-COMP:11605"/>
        <dbReference type="ChEBI" id="CHEBI:15378"/>
        <dbReference type="ChEBI" id="CHEBI:30013"/>
        <dbReference type="ChEBI" id="CHEBI:30616"/>
        <dbReference type="ChEBI" id="CHEBI:61977"/>
        <dbReference type="ChEBI" id="CHEBI:456216"/>
        <dbReference type="EC" id="2.7.11.13"/>
    </reaction>
</comment>
<comment type="cofactor">
    <cofactor evidence="1">
        <name>Mg(2+)</name>
        <dbReference type="ChEBI" id="CHEBI:18420"/>
    </cofactor>
</comment>
<comment type="activity regulation">
    <text evidence="12">Activated by DAG and phorbol esters. Phorbol-ester/DAG-type domains 1 and 2 bind both DAG and phorbol ester with high affinity and mediate translocation to the cell membrane. Autophosphorylation of Ser-735 and phosphorylation of Ser-731 by PKC relieves auto-inhibition by the PH domain.</text>
</comment>
<comment type="interaction">
    <interactant intactId="EBI-1255366">
        <id>O94806</id>
    </interactant>
    <interactant intactId="EBI-520113">
        <id>P63027</id>
        <label>VAMP2</label>
    </interactant>
    <organismsDiffer>false</organismsDiffer>
    <experiments>7</experiments>
</comment>
<comment type="interaction">
    <interactant intactId="EBI-13337369">
        <id>O94806-2</id>
    </interactant>
    <interactant intactId="EBI-10320765">
        <id>Q9UGP5-2</id>
        <label>POLL</label>
    </interactant>
    <organismsDiffer>false</organismsDiffer>
    <experiments>3</experiments>
</comment>
<comment type="subcellular location">
    <subcellularLocation>
        <location evidence="12">Cytoplasm</location>
    </subcellularLocation>
    <subcellularLocation>
        <location evidence="12">Membrane</location>
    </subcellularLocation>
    <text>Translocation to the cell membrane is required for kinase activation.</text>
</comment>
<comment type="alternative products">
    <event type="alternative splicing"/>
    <isoform>
        <id>O94806-1</id>
        <name>1</name>
        <sequence type="displayed"/>
    </isoform>
    <isoform>
        <id>O94806-2</id>
        <name>2</name>
        <sequence type="described" ref="VSP_029405 VSP_029406"/>
    </isoform>
</comment>
<comment type="tissue specificity">
    <text>Ubiquitous.</text>
</comment>
<comment type="similarity">
    <text evidence="14">Belongs to the protein kinase superfamily. CAMK Ser/Thr protein kinase family. PKD subfamily.</text>
</comment>
<sequence>MSANNSPPSAQKSVLPTAIPAVLPAASPCSSPKTGLSARLSNGSFSAPSLTNSRGSVHTVSFLLQIGLTRESVTIEAQELSLSAVKDLVCSIVYQKFPECGFFGMYDKILLFRHDMNSENILQLITSADEIHEGDLVEVVLSALATVEDFQIRPHTLYVHSYKAPTFCDYCGEMLWGLVRQGLKCEGCGLNYHKRCAFKIPNNCSGVRKRRLSNVSLPGPGLSVPRPLQPEYVALPSEESHVHQEPSKRIPSWSGRPIWMEKMVMCRVKVPHTFAVHSYTRPTICQYCKRLLKGLFRQGMQCKDCKFNCHKRCASKVPRDCLGEVTFNGEPSSLGTDTDIPMDIDNNDINSDSSRGLDDTEEPSPPEDKMFFLDPSDLDVERDEEAVKTISPSTSNNIPLMRVVQSIKHTKRKSSTMVKEGWMVHYTSRDNLRKRHYWRLDSKCLTLFQNESGSKYYKEIPLSEILRISSPRDFTNISQGSNPHCFEIITDTMVYFVGENNGDSSHNPVLAATGVGLDVAQSWEKAIRQALMPVTPQASVCTSPGQGKDHKDLSTSISVSNCQIQENVDISTVYQIFADEVLGSGQFGIVYGGKHRKTGRDVAIKVIDKMRFPTKQESQLRNEVAILQNLHHPGIVNLECMFETPERVFVVMEKLHGDMLEMILSSEKSRLPERITKFMVTQILVALRNLHFKNIVHCDLKPENVLLASAEPFPQVKLCDFGFARIIGEKSFRRSVVGTPAYLAPEVLRSKGYNRSLDMWSVGVIIYVSLSGTFPFNEDEDINDQIQNAAFMYPPNPWREISGEAIDLINNLLQVKMRKRYSVDKSLSHPWLQDYQTWLDLREFETRIGERYITHESDDARWEIHAYTHNLVYPKHFIMAPNPDDMEEDP</sequence>
<protein>
    <recommendedName>
        <fullName>Serine/threonine-protein kinase D3</fullName>
        <ecNumber>2.7.11.13</ecNumber>
    </recommendedName>
    <alternativeName>
        <fullName>Protein kinase C nu type</fullName>
    </alternativeName>
    <alternativeName>
        <fullName>Protein kinase EPK2</fullName>
    </alternativeName>
    <alternativeName>
        <fullName>nPKC-nu</fullName>
    </alternativeName>
</protein>
<feature type="chain" id="PRO_0000055717" description="Serine/threonine-protein kinase D3">
    <location>
        <begin position="1"/>
        <end position="890"/>
    </location>
</feature>
<feature type="domain" description="PH" evidence="5">
    <location>
        <begin position="416"/>
        <end position="532"/>
    </location>
</feature>
<feature type="domain" description="Protein kinase" evidence="6">
    <location>
        <begin position="576"/>
        <end position="832"/>
    </location>
</feature>
<feature type="zinc finger region" description="Phorbol-ester/DAG-type 1" evidence="7">
    <location>
        <begin position="154"/>
        <end position="204"/>
    </location>
</feature>
<feature type="zinc finger region" description="Phorbol-ester/DAG-type 2" evidence="7">
    <location>
        <begin position="271"/>
        <end position="321"/>
    </location>
</feature>
<feature type="region of interest" description="Disordered" evidence="9">
    <location>
        <begin position="332"/>
        <end position="371"/>
    </location>
</feature>
<feature type="active site" description="Proton acceptor" evidence="6 8">
    <location>
        <position position="699"/>
    </location>
</feature>
<feature type="binding site" evidence="6">
    <location>
        <begin position="582"/>
        <end position="590"/>
    </location>
    <ligand>
        <name>ATP</name>
        <dbReference type="ChEBI" id="CHEBI:30616"/>
    </ligand>
</feature>
<feature type="binding site" evidence="6">
    <location>
        <position position="605"/>
    </location>
    <ligand>
        <name>ATP</name>
        <dbReference type="ChEBI" id="CHEBI:30616"/>
    </ligand>
</feature>
<feature type="modified residue" description="Phosphoserine" evidence="17">
    <location>
        <position position="6"/>
    </location>
</feature>
<feature type="modified residue" description="Phosphoserine" evidence="16 17 18 19">
    <location>
        <position position="27"/>
    </location>
</feature>
<feature type="modified residue" description="Phosphoserine" evidence="17">
    <location>
        <position position="37"/>
    </location>
</feature>
<feature type="modified residue" description="Phosphoserine" evidence="16 17 18 19 20">
    <location>
        <position position="41"/>
    </location>
</feature>
<feature type="modified residue" description="Phosphoserine" evidence="16 19 20">
    <location>
        <position position="44"/>
    </location>
</feature>
<feature type="modified residue" description="Phosphoserine" evidence="17 18">
    <location>
        <position position="213"/>
    </location>
</feature>
<feature type="modified residue" description="Phosphoserine" evidence="17 18">
    <location>
        <position position="216"/>
    </location>
</feature>
<feature type="modified residue" description="Phosphoserine" evidence="15 16 17 18 20">
    <location>
        <position position="364"/>
    </location>
</feature>
<feature type="modified residue" description="Phosphoserine" evidence="2">
    <location>
        <position position="391"/>
    </location>
</feature>
<feature type="modified residue" description="Phosphoserine" evidence="2">
    <location>
        <position position="395"/>
    </location>
</feature>
<feature type="modified residue" description="Phosphotyrosine" evidence="2">
    <location>
        <position position="426"/>
    </location>
</feature>
<feature type="modified residue" description="Phosphoserine" evidence="2">
    <location>
        <position position="442"/>
    </location>
</feature>
<feature type="modified residue" description="Phosphotyrosine" evidence="4">
    <location>
        <position position="457"/>
    </location>
</feature>
<feature type="modified residue" description="Phosphothreonine" evidence="17 18">
    <location>
        <position position="535"/>
    </location>
</feature>
<feature type="modified residue" description="Phosphoserine" evidence="3">
    <location>
        <position position="539"/>
    </location>
</feature>
<feature type="modified residue" description="Phosphoserine; by PKC" evidence="2">
    <location>
        <position position="731"/>
    </location>
</feature>
<feature type="modified residue" description="Phosphoserine; by autocatalysis" evidence="2">
    <location>
        <position position="735"/>
    </location>
</feature>
<feature type="modified residue" description="Phosphotyrosine" evidence="4">
    <location>
        <position position="742"/>
    </location>
</feature>
<feature type="splice variant" id="VSP_029405" description="In isoform 2." evidence="13">
    <original>HRKTGRDVAIKVIDKMR</original>
    <variation>QLQPFAYCTHYFKNWKM</variation>
    <location>
        <begin position="595"/>
        <end position="611"/>
    </location>
</feature>
<feature type="splice variant" id="VSP_029406" description="In isoform 2." evidence="13">
    <location>
        <begin position="612"/>
        <end position="890"/>
    </location>
</feature>
<feature type="sequence variant" id="VAR_037147" description="In dbSNP:rs11896614.">
    <original>N</original>
    <variation>D</variation>
    <location>
        <position position="42"/>
    </location>
</feature>
<feature type="sequence variant" id="VAR_037148" description="In dbSNP:rs17852819." evidence="10">
    <original>A</original>
    <variation>T</variation>
    <location>
        <position position="128"/>
    </location>
</feature>
<feature type="sequence variant" id="VAR_050561" description="In dbSNP:rs34280934.">
    <original>P</original>
    <variation>S</variation>
    <location>
        <position position="225"/>
    </location>
</feature>
<feature type="sequence variant" id="VAR_061532" description="In dbSNP:rs55912911.">
    <original>L</original>
    <variation>I</variation>
    <location>
        <position position="445"/>
    </location>
</feature>
<feature type="sequence variant" id="VAR_037149" description="In dbSNP:rs17856887." evidence="10">
    <original>Q</original>
    <variation>R</variation>
    <location>
        <position position="546"/>
    </location>
</feature>
<feature type="sequence variant" id="VAR_042336" description="In a glioblastoma multiforme sample; somatic mutation." evidence="11">
    <original>V</original>
    <variation>M</variation>
    <location>
        <position position="716"/>
    </location>
</feature>
<feature type="mutagenesis site" description="Slight loss in ability to bind DAG and phorbol-ester; when associated with F-158." evidence="12">
    <original>T</original>
    <variation>A</variation>
    <location>
        <position position="156"/>
    </location>
</feature>
<feature type="mutagenesis site" description="Slight loss in ability to bind DAG and phorbol-ester; when associated with A-156." evidence="12">
    <original>Y</original>
    <variation>F</variation>
    <location>
        <position position="158"/>
    </location>
</feature>
<feature type="mutagenesis site" description="No effect on ability to bind phorbol ester, loss of ability to bind DAG, reduced DAG-induced membrane translocation." evidence="12">
    <original>P</original>
    <variation>G</variation>
    <location>
        <position position="165"/>
    </location>
</feature>
<feature type="mutagenesis site" description="Slight loss in ability to bind DAG and phorbol-ester." evidence="12">
    <original>T</original>
    <variation>A</variation>
    <location>
        <position position="166"/>
    </location>
</feature>
<feature type="mutagenesis site" description="Slight loss in ability to bind DAG and phorbol-ester." evidence="12">
    <original>Y</original>
    <variation>F</variation>
    <location>
        <position position="170"/>
    </location>
</feature>
<feature type="mutagenesis site" description="No effect on ability to bind phorbol ester, increase in ability to bind DAG." evidence="12">
    <original>P</original>
    <variation>G</variation>
    <location>
        <position position="282"/>
    </location>
</feature>
<feature type="mutagenesis site" description="Slight increase in ability to bind DAG, no effect on phorbol-ester binding.">
    <original>I</original>
    <variation>V</variation>
    <location>
        <position position="284"/>
    </location>
</feature>
<feature type="mutagenesis site" description="Increased ability to bind DAG, no effect on phorbol-ester binding." evidence="12">
    <original>K</original>
    <variation>W</variation>
    <location>
        <position position="293"/>
    </location>
</feature>
<feature type="strand" evidence="21">
    <location>
        <begin position="417"/>
        <end position="429"/>
    </location>
</feature>
<feature type="strand" evidence="21">
    <location>
        <begin position="434"/>
        <end position="443"/>
    </location>
</feature>
<feature type="strand" evidence="21">
    <location>
        <begin position="445"/>
        <end position="449"/>
    </location>
</feature>
<feature type="turn" evidence="21">
    <location>
        <begin position="462"/>
        <end position="464"/>
    </location>
</feature>
<feature type="strand" evidence="21">
    <location>
        <begin position="477"/>
        <end position="479"/>
    </location>
</feature>
<feature type="strand" evidence="21">
    <location>
        <begin position="485"/>
        <end position="489"/>
    </location>
</feature>
<feature type="strand" evidence="21">
    <location>
        <begin position="494"/>
        <end position="497"/>
    </location>
</feature>
<feature type="turn" evidence="21">
    <location>
        <begin position="508"/>
        <end position="514"/>
    </location>
</feature>
<feature type="helix" evidence="21">
    <location>
        <begin position="517"/>
        <end position="532"/>
    </location>
</feature>
<proteinExistence type="evidence at protein level"/>